<comment type="function">
    <text evidence="1 2">Mediates microtubule-dependent, anterograde transport connecting the Golgi network, endosomes, autophagosomes, lysosomes and plasma membrane, and participates in several cellular processes such as regulation of lysosomal pH, lysosome protein degradation, receptor-mediated endocytosis, autophagy, transport of proteins and lipids from the TGN, apoptosis and synaptic transmission. Facilitates the proteins transport from trans-Golgi network (TGN)-to other membrane compartments such as transport of microdomain-associated proteins to the plasma membrane, IGF2R transport to the lysosome where it regulates the CTSD release leading to regulation of CTSD maturation and thereby APP intracellular processing (By similarity). Moreover regulates CTSD activity in response to osmotic stress (By similarity). Also binds galactosylceramide and transports it from the trans Golgi to the rafts, which may have immediate and downstream effects on cell survival by modulating ceramide synthesis. At the plasma membrane, regulates actin-dependent events including filopodia formation, cell migration, and pinocytosis through ARF1-CDC42 pathway and also the cytoskeleton organization through interaction with MYH10 and fodrin leading to the regulation of the plasma membrane association of Na+, K+ ATPase complex. Regulates synaptic transmission in the amygdala, hippocampus, and cerebellum through regulation of synaptic vesicles density and their proximity to active zones leading to modulation of short-term plasticity and age-dependent anxious behavior, learning and memory. Regulates autophagic vacuoles (AVs) maturation by modulating the trafficking between endocytic and autophagolysosomal/lysosomal compartments, which involves vesicle fusion leading to regulation of degradation process. Also participates in cellular homeostasis of compounds such as, water, ions, amino acids, proteins and lipids in several tissue namely in brain and kidney through regulation of their transport and synthesis (By similarity).</text>
</comment>
<comment type="subunit">
    <text evidence="1">Interacts with DCTN1, KIF3A, RAB7A and RILP. Interacts with CLN5.</text>
</comment>
<comment type="subcellular location">
    <subcellularLocation>
        <location evidence="1">Lysosome membrane</location>
        <topology evidence="3">Multi-pass membrane protein</topology>
    </subcellularLocation>
    <subcellularLocation>
        <location evidence="1">Late endosome</location>
    </subcellularLocation>
    <subcellularLocation>
        <location evidence="1">Lysosome</location>
    </subcellularLocation>
</comment>
<comment type="PTM">
    <text evidence="1">Highly glycosylated.</text>
</comment>
<comment type="PTM">
    <text evidence="1">Farnesylation is important for trafficking to lysosomes.</text>
</comment>
<comment type="similarity">
    <text evidence="5">Belongs to the battenin family.</text>
</comment>
<gene>
    <name evidence="1" type="primary">CLN3</name>
</gene>
<keyword id="KW-0967">Endosome</keyword>
<keyword id="KW-0325">Glycoprotein</keyword>
<keyword id="KW-0449">Lipoprotein</keyword>
<keyword id="KW-0458">Lysosome</keyword>
<keyword id="KW-0472">Membrane</keyword>
<keyword id="KW-0488">Methylation</keyword>
<keyword id="KW-0597">Phosphoprotein</keyword>
<keyword id="KW-0636">Prenylation</keyword>
<keyword id="KW-1185">Reference proteome</keyword>
<keyword id="KW-0812">Transmembrane</keyword>
<keyword id="KW-1133">Transmembrane helix</keyword>
<keyword id="KW-0813">Transport</keyword>
<feature type="chain" id="PRO_0000089856" description="Battenin">
    <location>
        <begin position="1"/>
        <end position="435"/>
    </location>
</feature>
<feature type="propeptide" id="PRO_0000422289" description="Removed in mature form" evidence="1">
    <location>
        <begin position="436"/>
        <end position="438"/>
    </location>
</feature>
<feature type="topological domain" description="Cytoplasmic" evidence="1 3">
    <location>
        <begin position="1"/>
        <end position="37"/>
    </location>
</feature>
<feature type="transmembrane region" description="Helical" evidence="3">
    <location>
        <begin position="38"/>
        <end position="58"/>
    </location>
</feature>
<feature type="topological domain" description="Lumenal" evidence="3">
    <location>
        <begin position="59"/>
        <end position="127"/>
    </location>
</feature>
<feature type="transmembrane region" description="Helical" evidence="3">
    <location>
        <begin position="128"/>
        <end position="148"/>
    </location>
</feature>
<feature type="topological domain" description="Cytoplasmic" evidence="3">
    <location>
        <begin position="149"/>
        <end position="151"/>
    </location>
</feature>
<feature type="transmembrane region" description="Helical" evidence="3">
    <location>
        <begin position="152"/>
        <end position="172"/>
    </location>
</feature>
<feature type="topological domain" description="Lumenal" evidence="3">
    <location>
        <begin position="173"/>
        <end position="182"/>
    </location>
</feature>
<feature type="transmembrane region" description="Helical" evidence="3">
    <location>
        <begin position="183"/>
        <end position="203"/>
    </location>
</feature>
<feature type="topological domain" description="Cytoplasmic" evidence="1 3">
    <location>
        <begin position="204"/>
        <end position="277"/>
    </location>
</feature>
<feature type="transmembrane region" description="Helical" evidence="3">
    <location>
        <begin position="278"/>
        <end position="298"/>
    </location>
</feature>
<feature type="topological domain" description="Lumenal" evidence="1 3">
    <location>
        <begin position="299"/>
        <end position="346"/>
    </location>
</feature>
<feature type="transmembrane region" description="Helical" evidence="3">
    <location>
        <begin position="347"/>
        <end position="367"/>
    </location>
</feature>
<feature type="topological domain" description="Cytoplasmic" evidence="1 3">
    <location>
        <begin position="368"/>
        <end position="438"/>
    </location>
</feature>
<feature type="region of interest" description="Disordered" evidence="4">
    <location>
        <begin position="1"/>
        <end position="29"/>
    </location>
</feature>
<feature type="region of interest" description="Disordered" evidence="4">
    <location>
        <begin position="68"/>
        <end position="89"/>
    </location>
</feature>
<feature type="region of interest" description="Disordered" evidence="4">
    <location>
        <begin position="236"/>
        <end position="267"/>
    </location>
</feature>
<feature type="short sequence motif" description="Lysosomal targeting motif" evidence="1">
    <location>
        <begin position="242"/>
        <end position="244"/>
    </location>
</feature>
<feature type="short sequence motif" description="Lysosomal targeting motif. Required for AP1G1, AP2A2 and AP3D1 interaction" evidence="1">
    <location>
        <begin position="253"/>
        <end position="254"/>
    </location>
</feature>
<feature type="short sequence motif" description="Lysosomal targeting motif" evidence="1">
    <location>
        <begin position="409"/>
        <end position="419"/>
    </location>
</feature>
<feature type="modified residue" description="Phosphoserine" evidence="1">
    <location>
        <position position="14"/>
    </location>
</feature>
<feature type="modified residue" description="Cysteine methyl ester" evidence="1">
    <location>
        <position position="435"/>
    </location>
</feature>
<feature type="lipid moiety-binding region" description="S-farnesyl cysteine" evidence="1">
    <location>
        <position position="435"/>
    </location>
</feature>
<feature type="glycosylation site" description="N-linked (GlcNAc...) asparagine" evidence="3">
    <location>
        <position position="71"/>
    </location>
</feature>
<feature type="glycosylation site" description="N-linked (GlcNAc...) asparagine" evidence="3">
    <location>
        <position position="85"/>
    </location>
</feature>
<feature type="glycosylation site" description="N-linked (GlcNAc...) asparagine" evidence="3">
    <location>
        <position position="310"/>
    </location>
</feature>
<dbReference type="EMBL" id="L76281">
    <property type="protein sequence ID" value="AAB05546.1"/>
    <property type="molecule type" value="Genomic_DNA"/>
</dbReference>
<dbReference type="EMBL" id="L76282">
    <property type="protein sequence ID" value="AAB05547.1"/>
    <property type="molecule type" value="Genomic_DNA"/>
</dbReference>
<dbReference type="EMBL" id="AF033661">
    <property type="protein sequence ID" value="AAB86972.1"/>
    <property type="molecule type" value="Genomic_DNA"/>
</dbReference>
<dbReference type="EMBL" id="AF033656">
    <property type="protein sequence ID" value="AAB86972.1"/>
    <property type="status" value="JOINED"/>
    <property type="molecule type" value="Genomic_DNA"/>
</dbReference>
<dbReference type="EMBL" id="AF033657">
    <property type="protein sequence ID" value="AAB86972.1"/>
    <property type="status" value="JOINED"/>
    <property type="molecule type" value="Genomic_DNA"/>
</dbReference>
<dbReference type="EMBL" id="AF033658">
    <property type="protein sequence ID" value="AAB86972.1"/>
    <property type="status" value="JOINED"/>
    <property type="molecule type" value="Genomic_DNA"/>
</dbReference>
<dbReference type="EMBL" id="AF033659">
    <property type="protein sequence ID" value="AAB86972.1"/>
    <property type="status" value="JOINED"/>
    <property type="molecule type" value="Genomic_DNA"/>
</dbReference>
<dbReference type="EMBL" id="AF033660">
    <property type="protein sequence ID" value="AAB86972.1"/>
    <property type="status" value="JOINED"/>
    <property type="molecule type" value="Genomic_DNA"/>
</dbReference>
<dbReference type="FunCoup" id="Q29611">
    <property type="interactions" value="40"/>
</dbReference>
<dbReference type="STRING" id="9615.ENSCAFP00000025242"/>
<dbReference type="GlyCosmos" id="Q29611">
    <property type="glycosylation" value="3 sites, No reported glycans"/>
</dbReference>
<dbReference type="PaxDb" id="9612-ENSCAFP00000025242"/>
<dbReference type="eggNOG" id="KOG3880">
    <property type="taxonomic scope" value="Eukaryota"/>
</dbReference>
<dbReference type="InParanoid" id="Q29611"/>
<dbReference type="OrthoDB" id="5965864at2759"/>
<dbReference type="Proteomes" id="UP000002254">
    <property type="component" value="Unplaced"/>
</dbReference>
<dbReference type="Proteomes" id="UP000694429">
    <property type="component" value="Unplaced"/>
</dbReference>
<dbReference type="Proteomes" id="UP000694542">
    <property type="component" value="Unplaced"/>
</dbReference>
<dbReference type="Proteomes" id="UP000805418">
    <property type="component" value="Unplaced"/>
</dbReference>
<dbReference type="GO" id="GO:0044754">
    <property type="term" value="C:autolysosome"/>
    <property type="evidence" value="ECO:0000250"/>
    <property type="project" value="UniProtKB"/>
</dbReference>
<dbReference type="GO" id="GO:0005901">
    <property type="term" value="C:caveola"/>
    <property type="evidence" value="ECO:0000250"/>
    <property type="project" value="UniProtKB"/>
</dbReference>
<dbReference type="GO" id="GO:0005737">
    <property type="term" value="C:cytoplasm"/>
    <property type="evidence" value="ECO:0000250"/>
    <property type="project" value="UniProtKB"/>
</dbReference>
<dbReference type="GO" id="GO:0005829">
    <property type="term" value="C:cytosol"/>
    <property type="evidence" value="ECO:0007669"/>
    <property type="project" value="GOC"/>
</dbReference>
<dbReference type="GO" id="GO:0005769">
    <property type="term" value="C:early endosome"/>
    <property type="evidence" value="ECO:0000250"/>
    <property type="project" value="UniProtKB"/>
</dbReference>
<dbReference type="GO" id="GO:0031901">
    <property type="term" value="C:early endosome membrane"/>
    <property type="evidence" value="ECO:0000250"/>
    <property type="project" value="UniProtKB"/>
</dbReference>
<dbReference type="GO" id="GO:0005783">
    <property type="term" value="C:endoplasmic reticulum"/>
    <property type="evidence" value="ECO:0000250"/>
    <property type="project" value="UniProtKB"/>
</dbReference>
<dbReference type="GO" id="GO:0005789">
    <property type="term" value="C:endoplasmic reticulum membrane"/>
    <property type="evidence" value="ECO:0000250"/>
    <property type="project" value="UniProtKB"/>
</dbReference>
<dbReference type="GO" id="GO:0005794">
    <property type="term" value="C:Golgi apparatus"/>
    <property type="evidence" value="ECO:0000250"/>
    <property type="project" value="UniProtKB"/>
</dbReference>
<dbReference type="GO" id="GO:0000139">
    <property type="term" value="C:Golgi membrane"/>
    <property type="evidence" value="ECO:0000250"/>
    <property type="project" value="UniProtKB"/>
</dbReference>
<dbReference type="GO" id="GO:0005795">
    <property type="term" value="C:Golgi stack"/>
    <property type="evidence" value="ECO:0000250"/>
    <property type="project" value="UniProtKB"/>
</dbReference>
<dbReference type="GO" id="GO:0005770">
    <property type="term" value="C:late endosome"/>
    <property type="evidence" value="ECO:0000250"/>
    <property type="project" value="UniProtKB"/>
</dbReference>
<dbReference type="GO" id="GO:0005765">
    <property type="term" value="C:lysosomal membrane"/>
    <property type="evidence" value="ECO:0000250"/>
    <property type="project" value="UniProtKB"/>
</dbReference>
<dbReference type="GO" id="GO:0005764">
    <property type="term" value="C:lysosome"/>
    <property type="evidence" value="ECO:0000250"/>
    <property type="project" value="UniProtKB"/>
</dbReference>
<dbReference type="GO" id="GO:0016020">
    <property type="term" value="C:membrane"/>
    <property type="evidence" value="ECO:0000250"/>
    <property type="project" value="UniProtKB"/>
</dbReference>
<dbReference type="GO" id="GO:0045121">
    <property type="term" value="C:membrane raft"/>
    <property type="evidence" value="ECO:0000250"/>
    <property type="project" value="UniProtKB"/>
</dbReference>
<dbReference type="GO" id="GO:0043005">
    <property type="term" value="C:neuron projection"/>
    <property type="evidence" value="ECO:0000250"/>
    <property type="project" value="UniProtKB"/>
</dbReference>
<dbReference type="GO" id="GO:0005634">
    <property type="term" value="C:nucleus"/>
    <property type="evidence" value="ECO:0000250"/>
    <property type="project" value="UniProtKB"/>
</dbReference>
<dbReference type="GO" id="GO:0005886">
    <property type="term" value="C:plasma membrane"/>
    <property type="evidence" value="ECO:0000250"/>
    <property type="project" value="UniProtKB"/>
</dbReference>
<dbReference type="GO" id="GO:0055037">
    <property type="term" value="C:recycling endosome"/>
    <property type="evidence" value="ECO:0000250"/>
    <property type="project" value="UniProtKB"/>
</dbReference>
<dbReference type="GO" id="GO:0008021">
    <property type="term" value="C:synaptic vesicle"/>
    <property type="evidence" value="ECO:0000250"/>
    <property type="project" value="UniProtKB"/>
</dbReference>
<dbReference type="GO" id="GO:0005802">
    <property type="term" value="C:trans-Golgi network"/>
    <property type="evidence" value="ECO:0000250"/>
    <property type="project" value="UniProtKB"/>
</dbReference>
<dbReference type="GO" id="GO:0051861">
    <property type="term" value="F:glycolipid binding"/>
    <property type="evidence" value="ECO:0000250"/>
    <property type="project" value="UniProtKB"/>
</dbReference>
<dbReference type="GO" id="GO:0120146">
    <property type="term" value="F:sulfatide binding"/>
    <property type="evidence" value="ECO:0000250"/>
    <property type="project" value="UniProtKB"/>
</dbReference>
<dbReference type="GO" id="GO:0042987">
    <property type="term" value="P:amyloid precursor protein catabolic process"/>
    <property type="evidence" value="ECO:0000250"/>
    <property type="project" value="UniProtKB"/>
</dbReference>
<dbReference type="GO" id="GO:0061909">
    <property type="term" value="P:autophagosome-lysosome fusion"/>
    <property type="evidence" value="ECO:0000250"/>
    <property type="project" value="UniProtKB"/>
</dbReference>
<dbReference type="GO" id="GO:0046474">
    <property type="term" value="P:glycerophospholipid biosynthetic process"/>
    <property type="evidence" value="ECO:0000250"/>
    <property type="project" value="UniProtKB"/>
</dbReference>
<dbReference type="GO" id="GO:0046836">
    <property type="term" value="P:glycolipid transport"/>
    <property type="evidence" value="ECO:0000250"/>
    <property type="project" value="UniProtKB"/>
</dbReference>
<dbReference type="GO" id="GO:0090160">
    <property type="term" value="P:Golgi to lysosome transport"/>
    <property type="evidence" value="ECO:0000250"/>
    <property type="project" value="UniProtKB"/>
</dbReference>
<dbReference type="GO" id="GO:0009992">
    <property type="term" value="P:intracellular water homeostasis"/>
    <property type="evidence" value="ECO:0000250"/>
    <property type="project" value="UniProtKB"/>
</dbReference>
<dbReference type="GO" id="GO:1903826">
    <property type="term" value="P:L-arginine transmembrane transport"/>
    <property type="evidence" value="ECO:0000250"/>
    <property type="project" value="UniProtKB"/>
</dbReference>
<dbReference type="GO" id="GO:0007611">
    <property type="term" value="P:learning or memory"/>
    <property type="evidence" value="ECO:0000250"/>
    <property type="project" value="UniProtKB"/>
</dbReference>
<dbReference type="GO" id="GO:0007042">
    <property type="term" value="P:lysosomal lumen acidification"/>
    <property type="evidence" value="ECO:0000250"/>
    <property type="project" value="UniProtKB"/>
</dbReference>
<dbReference type="GO" id="GO:0035752">
    <property type="term" value="P:lysosomal lumen pH elevation"/>
    <property type="evidence" value="ECO:0000250"/>
    <property type="project" value="UniProtKB"/>
</dbReference>
<dbReference type="GO" id="GO:1905146">
    <property type="term" value="P:lysosomal protein catabolic process"/>
    <property type="evidence" value="ECO:0000250"/>
    <property type="project" value="UniProtKB"/>
</dbReference>
<dbReference type="GO" id="GO:0007040">
    <property type="term" value="P:lysosome organization"/>
    <property type="evidence" value="ECO:0000318"/>
    <property type="project" value="GO_Central"/>
</dbReference>
<dbReference type="GO" id="GO:0043066">
    <property type="term" value="P:negative regulation of apoptotic process"/>
    <property type="evidence" value="ECO:0000250"/>
    <property type="project" value="UniProtKB"/>
</dbReference>
<dbReference type="GO" id="GO:0090384">
    <property type="term" value="P:phagosome-lysosome docking"/>
    <property type="evidence" value="ECO:0000250"/>
    <property type="project" value="UniProtKB"/>
</dbReference>
<dbReference type="GO" id="GO:0090385">
    <property type="term" value="P:phagosome-lysosome fusion"/>
    <property type="evidence" value="ECO:0000250"/>
    <property type="project" value="UniProtKB"/>
</dbReference>
<dbReference type="GO" id="GO:0044857">
    <property type="term" value="P:plasma membrane raft organization"/>
    <property type="evidence" value="ECO:0000250"/>
    <property type="project" value="UniProtKB"/>
</dbReference>
<dbReference type="GO" id="GO:2001288">
    <property type="term" value="P:positive regulation of caveolin-mediated endocytosis"/>
    <property type="evidence" value="ECO:0000250"/>
    <property type="project" value="UniProtKB"/>
</dbReference>
<dbReference type="GO" id="GO:0042998">
    <property type="term" value="P:positive regulation of Golgi to plasma membrane protein transport"/>
    <property type="evidence" value="ECO:0000250"/>
    <property type="project" value="UniProtKB"/>
</dbReference>
<dbReference type="GO" id="GO:0048549">
    <property type="term" value="P:positive regulation of pinocytosis"/>
    <property type="evidence" value="ECO:0000250"/>
    <property type="project" value="UniProtKB"/>
</dbReference>
<dbReference type="GO" id="GO:0006898">
    <property type="term" value="P:receptor-mediated endocytosis"/>
    <property type="evidence" value="ECO:0000250"/>
    <property type="project" value="UniProtKB"/>
</dbReference>
<dbReference type="GO" id="GO:1900079">
    <property type="term" value="P:regulation of arginine biosynthetic process"/>
    <property type="evidence" value="ECO:0000250"/>
    <property type="project" value="UniProtKB"/>
</dbReference>
<dbReference type="GO" id="GO:1901096">
    <property type="term" value="P:regulation of autophagosome maturation"/>
    <property type="evidence" value="ECO:0000250"/>
    <property type="project" value="UniProtKB"/>
</dbReference>
<dbReference type="GO" id="GO:0106049">
    <property type="term" value="P:regulation of cellular response to osmotic stress"/>
    <property type="evidence" value="ECO:0000250"/>
    <property type="project" value="UniProtKB"/>
</dbReference>
<dbReference type="GO" id="GO:0051493">
    <property type="term" value="P:regulation of cytoskeleton organization"/>
    <property type="evidence" value="ECO:0000250"/>
    <property type="project" value="UniProtKB"/>
</dbReference>
<dbReference type="GO" id="GO:0010762">
    <property type="term" value="P:regulation of fibroblast migration"/>
    <property type="evidence" value="ECO:0000250"/>
    <property type="project" value="UniProtKB"/>
</dbReference>
<dbReference type="GO" id="GO:1905244">
    <property type="term" value="P:regulation of modification of synaptic structure"/>
    <property type="evidence" value="ECO:0000250"/>
    <property type="project" value="UniProtKB"/>
</dbReference>
<dbReference type="GO" id="GO:1905162">
    <property type="term" value="P:regulation of phagosome maturation"/>
    <property type="evidence" value="ECO:0000250"/>
    <property type="project" value="UniProtKB"/>
</dbReference>
<dbReference type="GO" id="GO:1903076">
    <property type="term" value="P:regulation of protein localization to plasma membrane"/>
    <property type="evidence" value="ECO:0000250"/>
    <property type="project" value="UniProtKB"/>
</dbReference>
<dbReference type="GO" id="GO:0070613">
    <property type="term" value="P:regulation of protein processing"/>
    <property type="evidence" value="ECO:0000250"/>
    <property type="project" value="UniProtKB"/>
</dbReference>
<dbReference type="GO" id="GO:0048172">
    <property type="term" value="P:regulation of short-term neuronal synaptic plasticity"/>
    <property type="evidence" value="ECO:0000250"/>
    <property type="project" value="UniProtKB"/>
</dbReference>
<dbReference type="GO" id="GO:0032228">
    <property type="term" value="P:regulation of synaptic transmission, GABAergic"/>
    <property type="evidence" value="ECO:0000250"/>
    <property type="project" value="UniProtKB"/>
</dbReference>
<dbReference type="GO" id="GO:0051966">
    <property type="term" value="P:regulation of synaptic transmission, glutamatergic"/>
    <property type="evidence" value="ECO:0000250"/>
    <property type="project" value="UniProtKB"/>
</dbReference>
<dbReference type="GO" id="GO:0036359">
    <property type="term" value="P:renal potassium excretion"/>
    <property type="evidence" value="ECO:0000250"/>
    <property type="project" value="UniProtKB"/>
</dbReference>
<dbReference type="GO" id="GO:0047496">
    <property type="term" value="P:vesicle transport along microtubule"/>
    <property type="evidence" value="ECO:0000250"/>
    <property type="project" value="UniProtKB"/>
</dbReference>
<dbReference type="FunFam" id="1.20.1250.20:FF:000228">
    <property type="entry name" value="Battenin"/>
    <property type="match status" value="1"/>
</dbReference>
<dbReference type="Gene3D" id="1.20.1250.20">
    <property type="entry name" value="MFS general substrate transporter like domains"/>
    <property type="match status" value="1"/>
</dbReference>
<dbReference type="InterPro" id="IPR003492">
    <property type="entry name" value="Battenin_disease_Cln3"/>
</dbReference>
<dbReference type="InterPro" id="IPR018460">
    <property type="entry name" value="Battenin_disease_Cln3_subgr"/>
</dbReference>
<dbReference type="InterPro" id="IPR036259">
    <property type="entry name" value="MFS_trans_sf"/>
</dbReference>
<dbReference type="PANTHER" id="PTHR10981">
    <property type="entry name" value="BATTENIN"/>
    <property type="match status" value="1"/>
</dbReference>
<dbReference type="PANTHER" id="PTHR10981:SF0">
    <property type="entry name" value="BATTENIN"/>
    <property type="match status" value="1"/>
</dbReference>
<dbReference type="Pfam" id="PF02487">
    <property type="entry name" value="CLN3"/>
    <property type="match status" value="1"/>
</dbReference>
<dbReference type="PIRSF" id="PIRSF015974">
    <property type="entry name" value="CLN3_BTN1"/>
    <property type="match status" value="1"/>
</dbReference>
<dbReference type="PRINTS" id="PR01315">
    <property type="entry name" value="BATTENIN"/>
</dbReference>
<dbReference type="SUPFAM" id="SSF103473">
    <property type="entry name" value="MFS general substrate transporter"/>
    <property type="match status" value="1"/>
</dbReference>
<name>CLN3_CANLF</name>
<proteinExistence type="inferred from homology"/>
<reference key="1">
    <citation type="journal article" date="1998" name="J. Neurosci. Res.">
        <title>Coding sequence and exon/intron organization of the canine CLN3 (Batten disease) gene and its exclusion as the locus for ceroid-lipofuscinosis in English setter dogs.</title>
        <authorList>
            <person name="Shibuya H."/>
            <person name="Liu P.-C."/>
            <person name="Katz M.L."/>
            <person name="Siakotos A.N."/>
            <person name="Nonneman D.J."/>
            <person name="Johnson G.S."/>
        </authorList>
    </citation>
    <scope>NUCLEOTIDE SEQUENCE [GENOMIC DNA / MRNA]</scope>
</reference>
<accession>Q29611</accession>
<sequence length="438" mass="47933">MGGCAGSRRRLLDSEEEETAPEPRPPRSYHKGALWKNVMGFWLLGLCNNFSYVVMLSAAHDILSHQRASGNQSHVDPDPPPTAHNSSSRFDCNSVSTAAVLLADILPTLIIKLLAPLGLHLLPYSPRVLVSGICAAGSFILVAFSHSVGTSLCGVVLASISSGVGEVTFLSLTAFYPRAVISWWSSGTGGAGLMGALSYLGLTQAGLSPQHTLLSMLGIPALMLASYFFLLTSPEPQDPGGEEEAETSARQPLIDSETPESKPDSSSNLSLQERWTVFKGLLWYIVPLVLVYFAEYFINQGLFELLFFRNTSLNHAQQYRWYQMLYQAGVFVSRSSLHCCRIRFTWVLALLQCLNLAFLLVDVWFSFLPSIYLVFLIILYEGLLGGAAYVNTFHNIALETSDQHREFAMAAACISDTLGISLSGLLALPLHDFLCHLS</sequence>
<evidence type="ECO:0000250" key="1">
    <source>
        <dbReference type="UniProtKB" id="Q13286"/>
    </source>
</evidence>
<evidence type="ECO:0000250" key="2">
    <source>
        <dbReference type="UniProtKB" id="Q61124"/>
    </source>
</evidence>
<evidence type="ECO:0000255" key="3"/>
<evidence type="ECO:0000256" key="4">
    <source>
        <dbReference type="SAM" id="MobiDB-lite"/>
    </source>
</evidence>
<evidence type="ECO:0000305" key="5"/>
<protein>
    <recommendedName>
        <fullName evidence="1">Battenin</fullName>
    </recommendedName>
    <alternativeName>
        <fullName>Protein CLN3</fullName>
    </alternativeName>
</protein>
<organism>
    <name type="scientific">Canis lupus familiaris</name>
    <name type="common">Dog</name>
    <name type="synonym">Canis familiaris</name>
    <dbReference type="NCBI Taxonomy" id="9615"/>
    <lineage>
        <taxon>Eukaryota</taxon>
        <taxon>Metazoa</taxon>
        <taxon>Chordata</taxon>
        <taxon>Craniata</taxon>
        <taxon>Vertebrata</taxon>
        <taxon>Euteleostomi</taxon>
        <taxon>Mammalia</taxon>
        <taxon>Eutheria</taxon>
        <taxon>Laurasiatheria</taxon>
        <taxon>Carnivora</taxon>
        <taxon>Caniformia</taxon>
        <taxon>Canidae</taxon>
        <taxon>Canis</taxon>
    </lineage>
</organism>